<proteinExistence type="inferred from homology"/>
<keyword id="KW-0687">Ribonucleoprotein</keyword>
<keyword id="KW-0689">Ribosomal protein</keyword>
<dbReference type="EMBL" id="CP001283">
    <property type="protein sequence ID" value="ACK87465.1"/>
    <property type="molecule type" value="Genomic_DNA"/>
</dbReference>
<dbReference type="RefSeq" id="WP_001260793.1">
    <property type="nucleotide sequence ID" value="NC_011773.1"/>
</dbReference>
<dbReference type="SMR" id="B7JKF3"/>
<dbReference type="GeneID" id="93010910"/>
<dbReference type="KEGG" id="bcu:BCAH820_0156"/>
<dbReference type="HOGENOM" id="CLU_082184_2_2_9"/>
<dbReference type="Proteomes" id="UP000001363">
    <property type="component" value="Chromosome"/>
</dbReference>
<dbReference type="GO" id="GO:0022625">
    <property type="term" value="C:cytosolic large ribosomal subunit"/>
    <property type="evidence" value="ECO:0007669"/>
    <property type="project" value="TreeGrafter"/>
</dbReference>
<dbReference type="GO" id="GO:0003729">
    <property type="term" value="F:mRNA binding"/>
    <property type="evidence" value="ECO:0007669"/>
    <property type="project" value="TreeGrafter"/>
</dbReference>
<dbReference type="GO" id="GO:0003735">
    <property type="term" value="F:structural constituent of ribosome"/>
    <property type="evidence" value="ECO:0007669"/>
    <property type="project" value="InterPro"/>
</dbReference>
<dbReference type="GO" id="GO:0017148">
    <property type="term" value="P:negative regulation of translation"/>
    <property type="evidence" value="ECO:0007669"/>
    <property type="project" value="TreeGrafter"/>
</dbReference>
<dbReference type="GO" id="GO:0006412">
    <property type="term" value="P:translation"/>
    <property type="evidence" value="ECO:0007669"/>
    <property type="project" value="UniProtKB-UniRule"/>
</dbReference>
<dbReference type="CDD" id="cd00392">
    <property type="entry name" value="Ribosomal_L13"/>
    <property type="match status" value="1"/>
</dbReference>
<dbReference type="FunFam" id="3.90.1180.10:FF:000001">
    <property type="entry name" value="50S ribosomal protein L13"/>
    <property type="match status" value="1"/>
</dbReference>
<dbReference type="Gene3D" id="3.90.1180.10">
    <property type="entry name" value="Ribosomal protein L13"/>
    <property type="match status" value="1"/>
</dbReference>
<dbReference type="HAMAP" id="MF_01366">
    <property type="entry name" value="Ribosomal_uL13"/>
    <property type="match status" value="1"/>
</dbReference>
<dbReference type="InterPro" id="IPR005822">
    <property type="entry name" value="Ribosomal_uL13"/>
</dbReference>
<dbReference type="InterPro" id="IPR005823">
    <property type="entry name" value="Ribosomal_uL13_bac-type"/>
</dbReference>
<dbReference type="InterPro" id="IPR023563">
    <property type="entry name" value="Ribosomal_uL13_CS"/>
</dbReference>
<dbReference type="InterPro" id="IPR036899">
    <property type="entry name" value="Ribosomal_uL13_sf"/>
</dbReference>
<dbReference type="NCBIfam" id="TIGR01066">
    <property type="entry name" value="rplM_bact"/>
    <property type="match status" value="1"/>
</dbReference>
<dbReference type="PANTHER" id="PTHR11545:SF2">
    <property type="entry name" value="LARGE RIBOSOMAL SUBUNIT PROTEIN UL13M"/>
    <property type="match status" value="1"/>
</dbReference>
<dbReference type="PANTHER" id="PTHR11545">
    <property type="entry name" value="RIBOSOMAL PROTEIN L13"/>
    <property type="match status" value="1"/>
</dbReference>
<dbReference type="Pfam" id="PF00572">
    <property type="entry name" value="Ribosomal_L13"/>
    <property type="match status" value="1"/>
</dbReference>
<dbReference type="PIRSF" id="PIRSF002181">
    <property type="entry name" value="Ribosomal_L13"/>
    <property type="match status" value="1"/>
</dbReference>
<dbReference type="SUPFAM" id="SSF52161">
    <property type="entry name" value="Ribosomal protein L13"/>
    <property type="match status" value="1"/>
</dbReference>
<dbReference type="PROSITE" id="PS00783">
    <property type="entry name" value="RIBOSOMAL_L13"/>
    <property type="match status" value="1"/>
</dbReference>
<reference key="1">
    <citation type="submission" date="2008-10" db="EMBL/GenBank/DDBJ databases">
        <title>Genome sequence of Bacillus cereus AH820.</title>
        <authorList>
            <person name="Dodson R.J."/>
            <person name="Durkin A.S."/>
            <person name="Rosovitz M.J."/>
            <person name="Rasko D.A."/>
            <person name="Hoffmaster A."/>
            <person name="Ravel J."/>
            <person name="Sutton G."/>
        </authorList>
    </citation>
    <scope>NUCLEOTIDE SEQUENCE [LARGE SCALE GENOMIC DNA]</scope>
    <source>
        <strain>AH820</strain>
    </source>
</reference>
<organism>
    <name type="scientific">Bacillus cereus (strain AH820)</name>
    <dbReference type="NCBI Taxonomy" id="405535"/>
    <lineage>
        <taxon>Bacteria</taxon>
        <taxon>Bacillati</taxon>
        <taxon>Bacillota</taxon>
        <taxon>Bacilli</taxon>
        <taxon>Bacillales</taxon>
        <taxon>Bacillaceae</taxon>
        <taxon>Bacillus</taxon>
        <taxon>Bacillus cereus group</taxon>
    </lineage>
</organism>
<comment type="function">
    <text evidence="1">This protein is one of the early assembly proteins of the 50S ribosomal subunit, although it is not seen to bind rRNA by itself. It is important during the early stages of 50S assembly.</text>
</comment>
<comment type="subunit">
    <text evidence="1">Part of the 50S ribosomal subunit.</text>
</comment>
<comment type="similarity">
    <text evidence="1">Belongs to the universal ribosomal protein uL13 family.</text>
</comment>
<gene>
    <name evidence="1" type="primary">rplM</name>
    <name type="ordered locus">BCAH820_0156</name>
</gene>
<accession>B7JKF3</accession>
<name>RL13_BACC0</name>
<evidence type="ECO:0000255" key="1">
    <source>
        <dbReference type="HAMAP-Rule" id="MF_01366"/>
    </source>
</evidence>
<evidence type="ECO:0000305" key="2"/>
<sequence length="145" mass="16428">MRTTFMAKANEVERKWYVVDAEGQTLGRLASEVASILRGKNKPTFTPHVDTGDHVIIINAEKIHLTGNKLNDKIYYRHTNHPGGLKQRTALEMRTNYPVQMLELAIKGMLPKGRLGRQVSKKLNVYAGAEHPHQAQKPEVYELRG</sequence>
<feature type="chain" id="PRO_1000144087" description="Large ribosomal subunit protein uL13">
    <location>
        <begin position="1"/>
        <end position="145"/>
    </location>
</feature>
<protein>
    <recommendedName>
        <fullName evidence="1">Large ribosomal subunit protein uL13</fullName>
    </recommendedName>
    <alternativeName>
        <fullName evidence="2">50S ribosomal protein L13</fullName>
    </alternativeName>
</protein>